<accession>Q1LSC6</accession>
<dbReference type="EC" id="3.5.2.9" evidence="1"/>
<dbReference type="EMBL" id="CP000352">
    <property type="protein sequence ID" value="ABF06950.1"/>
    <property type="molecule type" value="Genomic_DNA"/>
</dbReference>
<dbReference type="RefSeq" id="WP_011514989.1">
    <property type="nucleotide sequence ID" value="NC_007973.1"/>
</dbReference>
<dbReference type="SMR" id="Q1LSC6"/>
<dbReference type="STRING" id="266264.Rmet_0064"/>
<dbReference type="KEGG" id="rme:Rmet_0064"/>
<dbReference type="eggNOG" id="COG1540">
    <property type="taxonomic scope" value="Bacteria"/>
</dbReference>
<dbReference type="HOGENOM" id="CLU_069535_0_0_4"/>
<dbReference type="Proteomes" id="UP000002429">
    <property type="component" value="Chromosome"/>
</dbReference>
<dbReference type="GO" id="GO:0017168">
    <property type="term" value="F:5-oxoprolinase (ATP-hydrolyzing) activity"/>
    <property type="evidence" value="ECO:0007669"/>
    <property type="project" value="UniProtKB-UniRule"/>
</dbReference>
<dbReference type="GO" id="GO:0005524">
    <property type="term" value="F:ATP binding"/>
    <property type="evidence" value="ECO:0007669"/>
    <property type="project" value="UniProtKB-UniRule"/>
</dbReference>
<dbReference type="GO" id="GO:0005975">
    <property type="term" value="P:carbohydrate metabolic process"/>
    <property type="evidence" value="ECO:0007669"/>
    <property type="project" value="InterPro"/>
</dbReference>
<dbReference type="CDD" id="cd10800">
    <property type="entry name" value="LamB_YcsF_YbgL_like"/>
    <property type="match status" value="1"/>
</dbReference>
<dbReference type="Gene3D" id="3.20.20.370">
    <property type="entry name" value="Glycoside hydrolase/deacetylase"/>
    <property type="match status" value="1"/>
</dbReference>
<dbReference type="HAMAP" id="MF_00691">
    <property type="entry name" value="PxpA"/>
    <property type="match status" value="1"/>
</dbReference>
<dbReference type="InterPro" id="IPR011330">
    <property type="entry name" value="Glyco_hydro/deAcase_b/a-brl"/>
</dbReference>
<dbReference type="InterPro" id="IPR005501">
    <property type="entry name" value="LamB/YcsF/PxpA-like"/>
</dbReference>
<dbReference type="NCBIfam" id="NF003814">
    <property type="entry name" value="PRK05406.1-3"/>
    <property type="match status" value="1"/>
</dbReference>
<dbReference type="NCBIfam" id="NF003815">
    <property type="entry name" value="PRK05406.1-4"/>
    <property type="match status" value="1"/>
</dbReference>
<dbReference type="NCBIfam" id="NF003816">
    <property type="entry name" value="PRK05406.1-5"/>
    <property type="match status" value="1"/>
</dbReference>
<dbReference type="PANTHER" id="PTHR30292:SF0">
    <property type="entry name" value="5-OXOPROLINASE SUBUNIT A"/>
    <property type="match status" value="1"/>
</dbReference>
<dbReference type="PANTHER" id="PTHR30292">
    <property type="entry name" value="UNCHARACTERIZED PROTEIN YBGL-RELATED"/>
    <property type="match status" value="1"/>
</dbReference>
<dbReference type="Pfam" id="PF03746">
    <property type="entry name" value="LamB_YcsF"/>
    <property type="match status" value="1"/>
</dbReference>
<dbReference type="SUPFAM" id="SSF88713">
    <property type="entry name" value="Glycoside hydrolase/deacetylase"/>
    <property type="match status" value="1"/>
</dbReference>
<name>PXPA_CUPMC</name>
<organism>
    <name type="scientific">Cupriavidus metallidurans (strain ATCC 43123 / DSM 2839 / NBRC 102507 / CH34)</name>
    <name type="common">Ralstonia metallidurans</name>
    <dbReference type="NCBI Taxonomy" id="266264"/>
    <lineage>
        <taxon>Bacteria</taxon>
        <taxon>Pseudomonadati</taxon>
        <taxon>Pseudomonadota</taxon>
        <taxon>Betaproteobacteria</taxon>
        <taxon>Burkholderiales</taxon>
        <taxon>Burkholderiaceae</taxon>
        <taxon>Cupriavidus</taxon>
    </lineage>
</organism>
<reference key="1">
    <citation type="journal article" date="2010" name="PLoS ONE">
        <title>The complete genome sequence of Cupriavidus metallidurans strain CH34, a master survivalist in harsh and anthropogenic environments.</title>
        <authorList>
            <person name="Janssen P.J."/>
            <person name="Van Houdt R."/>
            <person name="Moors H."/>
            <person name="Monsieurs P."/>
            <person name="Morin N."/>
            <person name="Michaux A."/>
            <person name="Benotmane M.A."/>
            <person name="Leys N."/>
            <person name="Vallaeys T."/>
            <person name="Lapidus A."/>
            <person name="Monchy S."/>
            <person name="Medigue C."/>
            <person name="Taghavi S."/>
            <person name="McCorkle S."/>
            <person name="Dunn J."/>
            <person name="van der Lelie D."/>
            <person name="Mergeay M."/>
        </authorList>
    </citation>
    <scope>NUCLEOTIDE SEQUENCE [LARGE SCALE GENOMIC DNA]</scope>
    <source>
        <strain>ATCC 43123 / DSM 2839 / NBRC 102507 / CH34</strain>
    </source>
</reference>
<gene>
    <name evidence="1" type="primary">pxpA</name>
    <name type="ordered locus">Rmet_0064</name>
</gene>
<evidence type="ECO:0000255" key="1">
    <source>
        <dbReference type="HAMAP-Rule" id="MF_00691"/>
    </source>
</evidence>
<sequence>MQIDLNADLGEGCGNDEALLALISSANIACGWHAGDAATMLQTVKWALANKVSIGAHPSFPDRENFGRTEMQRDPEAVYADVLYQIGALDAMVRAQGGELAHVKPHGALYNMAVRDAKLCEAIVRAVRDYDSDLVFFGLANSQMIDIARAAGLRVKEEVFADRGYNPDGTLVKRGTPGALHEDEDVALNQTLSMVRDKQVRAIDGTWVPIRAETVCLHGDGAHALAFARRIRERLGAEGIAIRAGN</sequence>
<keyword id="KW-0067">ATP-binding</keyword>
<keyword id="KW-0378">Hydrolase</keyword>
<keyword id="KW-0547">Nucleotide-binding</keyword>
<keyword id="KW-1185">Reference proteome</keyword>
<comment type="function">
    <text evidence="1">Catalyzes the cleavage of 5-oxoproline to form L-glutamate coupled to the hydrolysis of ATP to ADP and inorganic phosphate.</text>
</comment>
<comment type="catalytic activity">
    <reaction evidence="1">
        <text>5-oxo-L-proline + ATP + 2 H2O = L-glutamate + ADP + phosphate + H(+)</text>
        <dbReference type="Rhea" id="RHEA:10348"/>
        <dbReference type="ChEBI" id="CHEBI:15377"/>
        <dbReference type="ChEBI" id="CHEBI:15378"/>
        <dbReference type="ChEBI" id="CHEBI:29985"/>
        <dbReference type="ChEBI" id="CHEBI:30616"/>
        <dbReference type="ChEBI" id="CHEBI:43474"/>
        <dbReference type="ChEBI" id="CHEBI:58402"/>
        <dbReference type="ChEBI" id="CHEBI:456216"/>
        <dbReference type="EC" id="3.5.2.9"/>
    </reaction>
</comment>
<comment type="subunit">
    <text evidence="1">Forms a complex composed of PxpA, PxpB and PxpC.</text>
</comment>
<comment type="similarity">
    <text evidence="1">Belongs to the LamB/PxpA family.</text>
</comment>
<proteinExistence type="inferred from homology"/>
<feature type="chain" id="PRO_1000045217" description="5-oxoprolinase subunit A">
    <location>
        <begin position="1"/>
        <end position="246"/>
    </location>
</feature>
<protein>
    <recommendedName>
        <fullName evidence="1">5-oxoprolinase subunit A</fullName>
        <shortName evidence="1">5-OPase subunit A</shortName>
        <ecNumber evidence="1">3.5.2.9</ecNumber>
    </recommendedName>
    <alternativeName>
        <fullName evidence="1">5-oxoprolinase (ATP-hydrolyzing) subunit A</fullName>
    </alternativeName>
</protein>